<sequence length="489" mass="54069">MTFRNCVAVDLGASSGRVMLARYERECRSLTLREIHRFNNGLHSQNGYVTWDVDSLESAIRLGLNKVCEEGIRIDSIGIDTWGVDFVLLDQQGQRVGLPVAYRDSRTNGLMAQAQQQLGKRDIYQRSGIQFLPFNTLYQLRALTEQQPELIPHIAHALLMPDYFSYRLTGKMNWEYTNATTTQLVNINSDDWDESLLAWSGANKAWFGRPTHPGNVIGHWICPQGNEIPVVAVASHDTASAVIASPLNGSRAAYLSSGTWSLMGFESQTPFTNDTALAANITNEGGAEGRYRVLKNIMGLWLLQRVLQEQQINDLPALISATQALPACRFIINPNDDRFINPETMCSEIQAACRETAQPIPESDAELARCIFDSLALLYADVLHELAQLRGEDFSQLHIVGGGCQNTLLNQLCADACGIRVIAGPVEASTLGNIGIQLMTLDELNNVDDFRQVVSTTANLTTFTPNPDSEIAHYVAQIHSTRQTKELCA</sequence>
<organism>
    <name type="scientific">Escherichia coli (strain ATCC 8739 / DSM 1576 / NBRC 3972 / NCIMB 8545 / WDCM 00012 / Crooks)</name>
    <dbReference type="NCBI Taxonomy" id="481805"/>
    <lineage>
        <taxon>Bacteria</taxon>
        <taxon>Pseudomonadati</taxon>
        <taxon>Pseudomonadota</taxon>
        <taxon>Gammaproteobacteria</taxon>
        <taxon>Enterobacterales</taxon>
        <taxon>Enterobacteriaceae</taxon>
        <taxon>Escherichia</taxon>
    </lineage>
</organism>
<proteinExistence type="inferred from homology"/>
<reference key="1">
    <citation type="submission" date="2008-02" db="EMBL/GenBank/DDBJ databases">
        <title>Complete sequence of Escherichia coli C str. ATCC 8739.</title>
        <authorList>
            <person name="Copeland A."/>
            <person name="Lucas S."/>
            <person name="Lapidus A."/>
            <person name="Glavina del Rio T."/>
            <person name="Dalin E."/>
            <person name="Tice H."/>
            <person name="Bruce D."/>
            <person name="Goodwin L."/>
            <person name="Pitluck S."/>
            <person name="Kiss H."/>
            <person name="Brettin T."/>
            <person name="Detter J.C."/>
            <person name="Han C."/>
            <person name="Kuske C.R."/>
            <person name="Schmutz J."/>
            <person name="Larimer F."/>
            <person name="Land M."/>
            <person name="Hauser L."/>
            <person name="Kyrpides N."/>
            <person name="Mikhailova N."/>
            <person name="Ingram L."/>
            <person name="Richardson P."/>
        </authorList>
    </citation>
    <scope>NUCLEOTIDE SEQUENCE [LARGE SCALE GENOMIC DNA]</scope>
    <source>
        <strain>ATCC 8739 / DSM 1576 / NBRC 3972 / NCIMB 8545 / WDCM 00012 / Crooks</strain>
    </source>
</reference>
<accession>B1IVH4</accession>
<keyword id="KW-0067">ATP-binding</keyword>
<keyword id="KW-1015">Disulfide bond</keyword>
<keyword id="KW-0418">Kinase</keyword>
<keyword id="KW-0460">Magnesium</keyword>
<keyword id="KW-0547">Nucleotide-binding</keyword>
<keyword id="KW-0684">Rhamnose metabolism</keyword>
<keyword id="KW-0808">Transferase</keyword>
<dbReference type="EC" id="2.7.1.5" evidence="1"/>
<dbReference type="EMBL" id="CP000946">
    <property type="protein sequence ID" value="ACA79711.1"/>
    <property type="molecule type" value="Genomic_DNA"/>
</dbReference>
<dbReference type="RefSeq" id="WP_000144073.1">
    <property type="nucleotide sequence ID" value="NZ_MTFT01000008.1"/>
</dbReference>
<dbReference type="SMR" id="B1IVH4"/>
<dbReference type="KEGG" id="ecl:EcolC_4113"/>
<dbReference type="HOGENOM" id="CLU_039395_0_0_6"/>
<dbReference type="UniPathway" id="UPA00541">
    <property type="reaction ID" value="UER00602"/>
</dbReference>
<dbReference type="GO" id="GO:0005829">
    <property type="term" value="C:cytosol"/>
    <property type="evidence" value="ECO:0007669"/>
    <property type="project" value="TreeGrafter"/>
</dbReference>
<dbReference type="GO" id="GO:0005524">
    <property type="term" value="F:ATP binding"/>
    <property type="evidence" value="ECO:0007669"/>
    <property type="project" value="UniProtKB-KW"/>
</dbReference>
<dbReference type="GO" id="GO:0004370">
    <property type="term" value="F:glycerol kinase activity"/>
    <property type="evidence" value="ECO:0007669"/>
    <property type="project" value="TreeGrafter"/>
</dbReference>
<dbReference type="GO" id="GO:0008993">
    <property type="term" value="F:rhamnulokinase activity"/>
    <property type="evidence" value="ECO:0007669"/>
    <property type="project" value="UniProtKB-UniRule"/>
</dbReference>
<dbReference type="GO" id="GO:0006071">
    <property type="term" value="P:glycerol metabolic process"/>
    <property type="evidence" value="ECO:0007669"/>
    <property type="project" value="TreeGrafter"/>
</dbReference>
<dbReference type="GO" id="GO:0019301">
    <property type="term" value="P:rhamnose catabolic process"/>
    <property type="evidence" value="ECO:0007669"/>
    <property type="project" value="UniProtKB-UniRule"/>
</dbReference>
<dbReference type="CDD" id="cd07771">
    <property type="entry name" value="ASKHA_NBD_FGGY_RhaB-like"/>
    <property type="match status" value="1"/>
</dbReference>
<dbReference type="FunFam" id="3.30.420.40:FF:000064">
    <property type="entry name" value="Rhamnulokinase"/>
    <property type="match status" value="1"/>
</dbReference>
<dbReference type="FunFam" id="3.30.420.40:FF:000073">
    <property type="entry name" value="Rhamnulokinase"/>
    <property type="match status" value="1"/>
</dbReference>
<dbReference type="Gene3D" id="3.30.420.40">
    <property type="match status" value="2"/>
</dbReference>
<dbReference type="HAMAP" id="MF_01535">
    <property type="entry name" value="Rhamnulokinase"/>
    <property type="match status" value="1"/>
</dbReference>
<dbReference type="InterPro" id="IPR043129">
    <property type="entry name" value="ATPase_NBD"/>
</dbReference>
<dbReference type="InterPro" id="IPR018485">
    <property type="entry name" value="FGGY_C"/>
</dbReference>
<dbReference type="InterPro" id="IPR018484">
    <property type="entry name" value="FGGY_N"/>
</dbReference>
<dbReference type="InterPro" id="IPR013449">
    <property type="entry name" value="Rhamnulokinase"/>
</dbReference>
<dbReference type="NCBIfam" id="NF007925">
    <property type="entry name" value="PRK10640.1"/>
    <property type="match status" value="1"/>
</dbReference>
<dbReference type="NCBIfam" id="TIGR02627">
    <property type="entry name" value="rhamnulo_kin"/>
    <property type="match status" value="1"/>
</dbReference>
<dbReference type="PANTHER" id="PTHR10196:SF93">
    <property type="entry name" value="L-RHAMNULOKINASE"/>
    <property type="match status" value="1"/>
</dbReference>
<dbReference type="PANTHER" id="PTHR10196">
    <property type="entry name" value="SUGAR KINASE"/>
    <property type="match status" value="1"/>
</dbReference>
<dbReference type="Pfam" id="PF02782">
    <property type="entry name" value="FGGY_C"/>
    <property type="match status" value="1"/>
</dbReference>
<dbReference type="Pfam" id="PF00370">
    <property type="entry name" value="FGGY_N"/>
    <property type="match status" value="1"/>
</dbReference>
<dbReference type="SUPFAM" id="SSF53067">
    <property type="entry name" value="Actin-like ATPase domain"/>
    <property type="match status" value="2"/>
</dbReference>
<comment type="function">
    <text evidence="1">Involved in the catabolism of L-rhamnose (6-deoxy-L-mannose). Catalyzes the transfer of the gamma-phosphate group from ATP to the 1-hydroxyl group of L-rhamnulose to yield L-rhamnulose 1-phosphate.</text>
</comment>
<comment type="catalytic activity">
    <reaction evidence="1">
        <text>L-rhamnulose + ATP = L-rhamnulose 1-phosphate + ADP + H(+)</text>
        <dbReference type="Rhea" id="RHEA:20117"/>
        <dbReference type="ChEBI" id="CHEBI:15378"/>
        <dbReference type="ChEBI" id="CHEBI:17897"/>
        <dbReference type="ChEBI" id="CHEBI:30616"/>
        <dbReference type="ChEBI" id="CHEBI:58313"/>
        <dbReference type="ChEBI" id="CHEBI:456216"/>
        <dbReference type="EC" id="2.7.1.5"/>
    </reaction>
</comment>
<comment type="cofactor">
    <cofactor evidence="1">
        <name>Mg(2+)</name>
        <dbReference type="ChEBI" id="CHEBI:18420"/>
    </cofactor>
</comment>
<comment type="pathway">
    <text evidence="1">Carbohydrate degradation; L-rhamnose degradation; glycerone phosphate from L-rhamnose: step 2/3.</text>
</comment>
<comment type="subunit">
    <text evidence="1">Monomer.</text>
</comment>
<comment type="similarity">
    <text evidence="1">Belongs to the rhamnulokinase family.</text>
</comment>
<evidence type="ECO:0000255" key="1">
    <source>
        <dbReference type="HAMAP-Rule" id="MF_01535"/>
    </source>
</evidence>
<gene>
    <name evidence="1" type="primary">rhaB</name>
    <name type="ordered locus">EcolC_4113</name>
</gene>
<feature type="chain" id="PRO_1000087601" description="Rhamnulokinase">
    <location>
        <begin position="1"/>
        <end position="489"/>
    </location>
</feature>
<feature type="active site" description="Proton acceptor" evidence="1">
    <location>
        <position position="237"/>
    </location>
</feature>
<feature type="binding site" evidence="1">
    <location>
        <begin position="13"/>
        <end position="17"/>
    </location>
    <ligand>
        <name>ATP</name>
        <dbReference type="ChEBI" id="CHEBI:30616"/>
    </ligand>
</feature>
<feature type="binding site" evidence="1">
    <location>
        <position position="83"/>
    </location>
    <ligand>
        <name>substrate</name>
    </ligand>
</feature>
<feature type="binding site" evidence="1">
    <location>
        <begin position="236"/>
        <end position="238"/>
    </location>
    <ligand>
        <name>substrate</name>
    </ligand>
</feature>
<feature type="binding site" evidence="1">
    <location>
        <position position="259"/>
    </location>
    <ligand>
        <name>ATP</name>
        <dbReference type="ChEBI" id="CHEBI:30616"/>
    </ligand>
</feature>
<feature type="binding site" evidence="1">
    <location>
        <position position="296"/>
    </location>
    <ligand>
        <name>substrate</name>
    </ligand>
</feature>
<feature type="binding site" evidence="1">
    <location>
        <position position="304"/>
    </location>
    <ligand>
        <name>ATP</name>
        <dbReference type="ChEBI" id="CHEBI:30616"/>
    </ligand>
</feature>
<feature type="binding site" evidence="1">
    <location>
        <position position="402"/>
    </location>
    <ligand>
        <name>ATP</name>
        <dbReference type="ChEBI" id="CHEBI:30616"/>
    </ligand>
</feature>
<feature type="disulfide bond" evidence="1">
    <location>
        <begin position="68"/>
        <end position="222"/>
    </location>
</feature>
<feature type="disulfide bond" evidence="1">
    <location>
        <begin position="353"/>
        <end position="370"/>
    </location>
</feature>
<feature type="disulfide bond" evidence="1">
    <location>
        <begin position="413"/>
        <end position="417"/>
    </location>
</feature>
<protein>
    <recommendedName>
        <fullName evidence="1">Rhamnulokinase</fullName>
        <shortName evidence="1">RhaB</shortName>
        <ecNumber evidence="1">2.7.1.5</ecNumber>
    </recommendedName>
    <alternativeName>
        <fullName evidence="1">ATP:L-rhamnulose phosphotransferase</fullName>
    </alternativeName>
    <alternativeName>
        <fullName evidence="1">L-rhamnulose 1-kinase</fullName>
    </alternativeName>
    <alternativeName>
        <fullName evidence="1">Rhamnulose kinase</fullName>
    </alternativeName>
</protein>
<name>RHAB_ECOLC</name>